<keyword id="KW-0255">Endonuclease</keyword>
<keyword id="KW-0378">Hydrolase</keyword>
<keyword id="KW-0540">Nuclease</keyword>
<keyword id="KW-0694">RNA-binding</keyword>
<keyword id="KW-0819">tRNA processing</keyword>
<sequence>MKKTYRVKREKDFQAIFKDGKSTANRKFVIYHLNRSQDHFRVGISVGKKIGNAVTRNAVKRKIRHVIMALGHQLKSEDFVVIARKGVESLEYQELQQNLHHVLKLAQLLEKGFESEEKH</sequence>
<protein>
    <recommendedName>
        <fullName evidence="1">Ribonuclease P protein component</fullName>
        <shortName evidence="1">RNase P protein</shortName>
        <shortName evidence="1">RNaseP protein</shortName>
        <ecNumber evidence="1">3.1.26.5</ecNumber>
    </recommendedName>
    <alternativeName>
        <fullName evidence="1">Protein C5</fullName>
    </alternativeName>
</protein>
<feature type="chain" id="PRO_1000021480" description="Ribonuclease P protein component">
    <location>
        <begin position="1"/>
        <end position="119"/>
    </location>
</feature>
<reference key="1">
    <citation type="journal article" date="2007" name="J. Bacteriol.">
        <title>Complete genome of acute rheumatic fever-associated serotype M5 Streptococcus pyogenes strain Manfredo.</title>
        <authorList>
            <person name="Holden M.T.G."/>
            <person name="Scott A."/>
            <person name="Cherevach I."/>
            <person name="Chillingworth T."/>
            <person name="Churcher C."/>
            <person name="Cronin A."/>
            <person name="Dowd L."/>
            <person name="Feltwell T."/>
            <person name="Hamlin N."/>
            <person name="Holroyd S."/>
            <person name="Jagels K."/>
            <person name="Moule S."/>
            <person name="Mungall K."/>
            <person name="Quail M.A."/>
            <person name="Price C."/>
            <person name="Rabbinowitsch E."/>
            <person name="Sharp S."/>
            <person name="Skelton J."/>
            <person name="Whitehead S."/>
            <person name="Barrell B.G."/>
            <person name="Kehoe M."/>
            <person name="Parkhill J."/>
        </authorList>
    </citation>
    <scope>NUCLEOTIDE SEQUENCE [LARGE SCALE GENOMIC DNA]</scope>
    <source>
        <strain>Manfredo</strain>
    </source>
</reference>
<gene>
    <name evidence="1" type="primary">rnpA</name>
    <name type="ordered locus">SpyM50187</name>
</gene>
<evidence type="ECO:0000255" key="1">
    <source>
        <dbReference type="HAMAP-Rule" id="MF_00227"/>
    </source>
</evidence>
<comment type="function">
    <text evidence="1">RNaseP catalyzes the removal of the 5'-leader sequence from pre-tRNA to produce the mature 5'-terminus. It can also cleave other RNA substrates such as 4.5S RNA. The protein component plays an auxiliary but essential role in vivo by binding to the 5'-leader sequence and broadening the substrate specificity of the ribozyme.</text>
</comment>
<comment type="catalytic activity">
    <reaction evidence="1">
        <text>Endonucleolytic cleavage of RNA, removing 5'-extranucleotides from tRNA precursor.</text>
        <dbReference type="EC" id="3.1.26.5"/>
    </reaction>
</comment>
<comment type="subunit">
    <text evidence="1">Consists of a catalytic RNA component (M1 or rnpB) and a protein subunit.</text>
</comment>
<comment type="similarity">
    <text evidence="1">Belongs to the RnpA family.</text>
</comment>
<dbReference type="EC" id="3.1.26.5" evidence="1"/>
<dbReference type="EMBL" id="AM295007">
    <property type="protein sequence ID" value="CAM29530.1"/>
    <property type="molecule type" value="Genomic_DNA"/>
</dbReference>
<dbReference type="RefSeq" id="WP_011888579.1">
    <property type="nucleotide sequence ID" value="NC_009332.1"/>
</dbReference>
<dbReference type="SMR" id="A2RCF8"/>
<dbReference type="KEGG" id="spf:SpyM50187"/>
<dbReference type="HOGENOM" id="CLU_117179_9_1_9"/>
<dbReference type="GO" id="GO:0030677">
    <property type="term" value="C:ribonuclease P complex"/>
    <property type="evidence" value="ECO:0007669"/>
    <property type="project" value="TreeGrafter"/>
</dbReference>
<dbReference type="GO" id="GO:0042781">
    <property type="term" value="F:3'-tRNA processing endoribonuclease activity"/>
    <property type="evidence" value="ECO:0007669"/>
    <property type="project" value="TreeGrafter"/>
</dbReference>
<dbReference type="GO" id="GO:0004526">
    <property type="term" value="F:ribonuclease P activity"/>
    <property type="evidence" value="ECO:0007669"/>
    <property type="project" value="UniProtKB-UniRule"/>
</dbReference>
<dbReference type="GO" id="GO:0000049">
    <property type="term" value="F:tRNA binding"/>
    <property type="evidence" value="ECO:0007669"/>
    <property type="project" value="UniProtKB-UniRule"/>
</dbReference>
<dbReference type="GO" id="GO:0001682">
    <property type="term" value="P:tRNA 5'-leader removal"/>
    <property type="evidence" value="ECO:0007669"/>
    <property type="project" value="UniProtKB-UniRule"/>
</dbReference>
<dbReference type="FunFam" id="3.30.230.10:FF:000021">
    <property type="entry name" value="Ribonuclease P protein component"/>
    <property type="match status" value="1"/>
</dbReference>
<dbReference type="Gene3D" id="3.30.230.10">
    <property type="match status" value="1"/>
</dbReference>
<dbReference type="HAMAP" id="MF_00227">
    <property type="entry name" value="RNase_P"/>
    <property type="match status" value="1"/>
</dbReference>
<dbReference type="InterPro" id="IPR020568">
    <property type="entry name" value="Ribosomal_Su5_D2-typ_SF"/>
</dbReference>
<dbReference type="InterPro" id="IPR014721">
    <property type="entry name" value="Ribsml_uS5_D2-typ_fold_subgr"/>
</dbReference>
<dbReference type="InterPro" id="IPR000100">
    <property type="entry name" value="RNase_P"/>
</dbReference>
<dbReference type="InterPro" id="IPR020539">
    <property type="entry name" value="RNase_P_CS"/>
</dbReference>
<dbReference type="NCBIfam" id="TIGR00188">
    <property type="entry name" value="rnpA"/>
    <property type="match status" value="1"/>
</dbReference>
<dbReference type="PANTHER" id="PTHR33992">
    <property type="entry name" value="RIBONUCLEASE P PROTEIN COMPONENT"/>
    <property type="match status" value="1"/>
</dbReference>
<dbReference type="PANTHER" id="PTHR33992:SF1">
    <property type="entry name" value="RIBONUCLEASE P PROTEIN COMPONENT"/>
    <property type="match status" value="1"/>
</dbReference>
<dbReference type="Pfam" id="PF00825">
    <property type="entry name" value="Ribonuclease_P"/>
    <property type="match status" value="1"/>
</dbReference>
<dbReference type="SUPFAM" id="SSF54211">
    <property type="entry name" value="Ribosomal protein S5 domain 2-like"/>
    <property type="match status" value="1"/>
</dbReference>
<dbReference type="PROSITE" id="PS00648">
    <property type="entry name" value="RIBONUCLEASE_P"/>
    <property type="match status" value="1"/>
</dbReference>
<accession>A2RCF8</accession>
<proteinExistence type="inferred from homology"/>
<organism>
    <name type="scientific">Streptococcus pyogenes serotype M5 (strain Manfredo)</name>
    <dbReference type="NCBI Taxonomy" id="160491"/>
    <lineage>
        <taxon>Bacteria</taxon>
        <taxon>Bacillati</taxon>
        <taxon>Bacillota</taxon>
        <taxon>Bacilli</taxon>
        <taxon>Lactobacillales</taxon>
        <taxon>Streptococcaceae</taxon>
        <taxon>Streptococcus</taxon>
    </lineage>
</organism>
<name>RNPA_STRPG</name>